<reference key="1">
    <citation type="journal article" date="1998" name="Nature">
        <title>Deciphering the biology of Mycobacterium tuberculosis from the complete genome sequence.</title>
        <authorList>
            <person name="Cole S.T."/>
            <person name="Brosch R."/>
            <person name="Parkhill J."/>
            <person name="Garnier T."/>
            <person name="Churcher C.M."/>
            <person name="Harris D.E."/>
            <person name="Gordon S.V."/>
            <person name="Eiglmeier K."/>
            <person name="Gas S."/>
            <person name="Barry C.E. III"/>
            <person name="Tekaia F."/>
            <person name="Badcock K."/>
            <person name="Basham D."/>
            <person name="Brown D."/>
            <person name="Chillingworth T."/>
            <person name="Connor R."/>
            <person name="Davies R.M."/>
            <person name="Devlin K."/>
            <person name="Feltwell T."/>
            <person name="Gentles S."/>
            <person name="Hamlin N."/>
            <person name="Holroyd S."/>
            <person name="Hornsby T."/>
            <person name="Jagels K."/>
            <person name="Krogh A."/>
            <person name="McLean J."/>
            <person name="Moule S."/>
            <person name="Murphy L.D."/>
            <person name="Oliver S."/>
            <person name="Osborne J."/>
            <person name="Quail M.A."/>
            <person name="Rajandream M.A."/>
            <person name="Rogers J."/>
            <person name="Rutter S."/>
            <person name="Seeger K."/>
            <person name="Skelton S."/>
            <person name="Squares S."/>
            <person name="Squares R."/>
            <person name="Sulston J.E."/>
            <person name="Taylor K."/>
            <person name="Whitehead S."/>
            <person name="Barrell B.G."/>
        </authorList>
    </citation>
    <scope>NUCLEOTIDE SEQUENCE [LARGE SCALE GENOMIC DNA]</scope>
    <source>
        <strain>ATCC 25618 / H37Rv</strain>
    </source>
</reference>
<reference key="2">
    <citation type="journal article" date="2002" name="Microbiology">
        <title>Re-annotation of the genome sequence of Mycobacterium tuberculosis H37Rv.</title>
        <authorList>
            <person name="Camus J.-C."/>
            <person name="Pryor M.J."/>
            <person name="Medigue C."/>
            <person name="Cole S.T."/>
        </authorList>
    </citation>
    <scope>IDENTIFICATION</scope>
    <source>
        <strain>ATCC 25618 / H37Rv</strain>
    </source>
</reference>
<reference key="3">
    <citation type="journal article" date="2011" name="Mol. Cell. Proteomics">
        <title>Proteogenomic analysis of Mycobacterium tuberculosis by high resolution mass spectrometry.</title>
        <authorList>
            <person name="Kelkar D.S."/>
            <person name="Kumar D."/>
            <person name="Kumar P."/>
            <person name="Balakrishnan L."/>
            <person name="Muthusamy B."/>
            <person name="Yadav A.K."/>
            <person name="Shrivastava P."/>
            <person name="Marimuthu A."/>
            <person name="Anand S."/>
            <person name="Sundaram H."/>
            <person name="Kingsbury R."/>
            <person name="Harsha H.C."/>
            <person name="Nair B."/>
            <person name="Prasad T.S."/>
            <person name="Chauhan D.S."/>
            <person name="Katoch K."/>
            <person name="Katoch V.M."/>
            <person name="Kumar P."/>
            <person name="Chaerkady R."/>
            <person name="Ramachandran S."/>
            <person name="Dash D."/>
            <person name="Pandey A."/>
        </authorList>
    </citation>
    <scope>IDENTIFICATION BY MASS SPECTROMETRY [LARGE SCALE ANALYSIS]</scope>
    <source>
        <strain>ATCC 25618 / H37Rv</strain>
    </source>
</reference>
<feature type="chain" id="PRO_0000194624" description="Uncharacterized HTH-type transcriptional regulator Rv1395">
    <location>
        <begin position="1"/>
        <end position="344"/>
    </location>
</feature>
<feature type="domain" description="HTH araC/xylS-type" evidence="1">
    <location>
        <begin position="242"/>
        <end position="343"/>
    </location>
</feature>
<feature type="DNA-binding region" description="H-T-H motif" evidence="1">
    <location>
        <begin position="263"/>
        <end position="284"/>
    </location>
</feature>
<feature type="DNA-binding region" description="H-T-H motif" evidence="1">
    <location>
        <begin position="310"/>
        <end position="333"/>
    </location>
</feature>
<dbReference type="EMBL" id="AL123456">
    <property type="protein sequence ID" value="CCP44154.1"/>
    <property type="molecule type" value="Genomic_DNA"/>
</dbReference>
<dbReference type="RefSeq" id="WP_003407264.1">
    <property type="nucleotide sequence ID" value="NZ_NVQJ01000050.1"/>
</dbReference>
<dbReference type="RefSeq" id="YP_177808.1">
    <property type="nucleotide sequence ID" value="NC_000962.3"/>
</dbReference>
<dbReference type="SMR" id="P9WMJ1"/>
<dbReference type="STRING" id="83332.Rv1395"/>
<dbReference type="PaxDb" id="83332-Rv1395"/>
<dbReference type="GeneID" id="886251"/>
<dbReference type="KEGG" id="mtu:Rv1395"/>
<dbReference type="KEGG" id="mtv:RVBD_1395"/>
<dbReference type="TubercuList" id="Rv1395"/>
<dbReference type="eggNOG" id="COG2207">
    <property type="taxonomic scope" value="Bacteria"/>
</dbReference>
<dbReference type="InParanoid" id="P9WMJ1"/>
<dbReference type="OrthoDB" id="5241536at2"/>
<dbReference type="PhylomeDB" id="P9WMJ1"/>
<dbReference type="Proteomes" id="UP000001584">
    <property type="component" value="Chromosome"/>
</dbReference>
<dbReference type="GO" id="GO:0003677">
    <property type="term" value="F:DNA binding"/>
    <property type="evidence" value="ECO:0000314"/>
    <property type="project" value="MTBBASE"/>
</dbReference>
<dbReference type="GO" id="GO:0003700">
    <property type="term" value="F:DNA-binding transcription factor activity"/>
    <property type="evidence" value="ECO:0000315"/>
    <property type="project" value="MTBBASE"/>
</dbReference>
<dbReference type="GO" id="GO:0000976">
    <property type="term" value="F:transcription cis-regulatory region binding"/>
    <property type="evidence" value="ECO:0000318"/>
    <property type="project" value="GO_Central"/>
</dbReference>
<dbReference type="Gene3D" id="1.10.10.60">
    <property type="entry name" value="Homeodomain-like"/>
    <property type="match status" value="1"/>
</dbReference>
<dbReference type="InterPro" id="IPR032687">
    <property type="entry name" value="AraC-type_N"/>
</dbReference>
<dbReference type="InterPro" id="IPR009057">
    <property type="entry name" value="Homeodomain-like_sf"/>
</dbReference>
<dbReference type="InterPro" id="IPR018060">
    <property type="entry name" value="HTH_AraC"/>
</dbReference>
<dbReference type="InterPro" id="IPR020449">
    <property type="entry name" value="Tscrpt_reg_AraC-type_HTH"/>
</dbReference>
<dbReference type="PANTHER" id="PTHR47894">
    <property type="entry name" value="HTH-TYPE TRANSCRIPTIONAL REGULATOR GADX"/>
    <property type="match status" value="1"/>
</dbReference>
<dbReference type="PANTHER" id="PTHR47894:SF1">
    <property type="entry name" value="HTH-TYPE TRANSCRIPTIONAL REGULATOR VQSM"/>
    <property type="match status" value="1"/>
</dbReference>
<dbReference type="Pfam" id="PF12625">
    <property type="entry name" value="Arabinose_bd"/>
    <property type="match status" value="1"/>
</dbReference>
<dbReference type="Pfam" id="PF12833">
    <property type="entry name" value="HTH_18"/>
    <property type="match status" value="1"/>
</dbReference>
<dbReference type="PRINTS" id="PR00032">
    <property type="entry name" value="HTHARAC"/>
</dbReference>
<dbReference type="SMART" id="SM00342">
    <property type="entry name" value="HTH_ARAC"/>
    <property type="match status" value="1"/>
</dbReference>
<dbReference type="SUPFAM" id="SSF46689">
    <property type="entry name" value="Homeodomain-like"/>
    <property type="match status" value="1"/>
</dbReference>
<dbReference type="PROSITE" id="PS01124">
    <property type="entry name" value="HTH_ARAC_FAMILY_2"/>
    <property type="match status" value="1"/>
</dbReference>
<keyword id="KW-0238">DNA-binding</keyword>
<keyword id="KW-1185">Reference proteome</keyword>
<keyword id="KW-0804">Transcription</keyword>
<keyword id="KW-0805">Transcription regulation</keyword>
<accession>P9WMJ1</accession>
<accession>L0T999</accession>
<accession>P68913</accession>
<accession>P71663</accession>
<evidence type="ECO:0000255" key="1">
    <source>
        <dbReference type="PROSITE-ProRule" id="PRU00593"/>
    </source>
</evidence>
<organism>
    <name type="scientific">Mycobacterium tuberculosis (strain ATCC 25618 / H37Rv)</name>
    <dbReference type="NCBI Taxonomy" id="83332"/>
    <lineage>
        <taxon>Bacteria</taxon>
        <taxon>Bacillati</taxon>
        <taxon>Actinomycetota</taxon>
        <taxon>Actinomycetes</taxon>
        <taxon>Mycobacteriales</taxon>
        <taxon>Mycobacteriaceae</taxon>
        <taxon>Mycobacterium</taxon>
        <taxon>Mycobacterium tuberculosis complex</taxon>
    </lineage>
</organism>
<protein>
    <recommendedName>
        <fullName>Uncharacterized HTH-type transcriptional regulator Rv1395</fullName>
    </recommendedName>
</protein>
<name>Y1395_MYCTU</name>
<proteinExistence type="evidence at protein level"/>
<sequence length="344" mass="37894">MGHLPPPAEVRHPVYATRVLCEVANERGVPTADVLAGTAIEPADLDDPDAVVGALDEITAVRRLLARLPDDAGIGIDVGSRFALTHFGLFGFAVMSCGTLRELLTIAMRYFALTTMHVDITLFETADDCLVELDASHLPADVRGFFIERDIAGIIATTTSFALPLAAKYADQVSAELAVDAELLRPLLELVPVHDVAFGRAHNRVHFPRAMFDEPLPQADRHTLEMCIAQCDVLMQRNERRRGITALVRSKLFRDSGLFPTFTDVAGELDMHPRTLRRRLAEEGTSFRALLGEARSTVAVDLLRNVGLTVQQVSTRLGYTEVSTFSHAFKRWYGVAPSEYSRRG</sequence>
<gene>
    <name type="ordered locus">Rv1395</name>
    <name type="ORF">MTCY21B4.12</name>
</gene>